<feature type="chain" id="PRO_0000163105" description="Molybdopterin synthase catalytic subunit">
    <location>
        <begin position="1"/>
        <end position="150"/>
    </location>
</feature>
<feature type="binding site" evidence="1">
    <location>
        <begin position="34"/>
        <end position="36"/>
    </location>
    <ligand>
        <name>substrate</name>
    </ligand>
</feature>
<feature type="binding site" evidence="1">
    <location>
        <position position="44"/>
    </location>
    <ligand>
        <name>substrate</name>
    </ligand>
</feature>
<feature type="binding site" evidence="1">
    <location>
        <begin position="100"/>
        <end position="101"/>
    </location>
    <ligand>
        <name>substrate</name>
    </ligand>
</feature>
<feature type="binding site" evidence="1">
    <location>
        <position position="116"/>
    </location>
    <ligand>
        <name>substrate</name>
    </ligand>
</feature>
<feature type="binding site" evidence="1">
    <location>
        <begin position="123"/>
        <end position="125"/>
    </location>
    <ligand>
        <name>substrate</name>
    </ligand>
</feature>
<accession>Q5HLX8</accession>
<evidence type="ECO:0000250" key="1"/>
<evidence type="ECO:0000305" key="2"/>
<gene>
    <name type="primary">moaE</name>
    <name type="ordered locus">SERP1853</name>
</gene>
<name>MOAE_STAEQ</name>
<keyword id="KW-0501">Molybdenum cofactor biosynthesis</keyword>
<keyword id="KW-1185">Reference proteome</keyword>
<keyword id="KW-0808">Transferase</keyword>
<organism>
    <name type="scientific">Staphylococcus epidermidis (strain ATCC 35984 / DSM 28319 / BCRC 17069 / CCUG 31568 / BM 3577 / RP62A)</name>
    <dbReference type="NCBI Taxonomy" id="176279"/>
    <lineage>
        <taxon>Bacteria</taxon>
        <taxon>Bacillati</taxon>
        <taxon>Bacillota</taxon>
        <taxon>Bacilli</taxon>
        <taxon>Bacillales</taxon>
        <taxon>Staphylococcaceae</taxon>
        <taxon>Staphylococcus</taxon>
    </lineage>
</organism>
<dbReference type="EC" id="2.8.1.12"/>
<dbReference type="EMBL" id="CP000029">
    <property type="protein sequence ID" value="AAW55205.1"/>
    <property type="molecule type" value="Genomic_DNA"/>
</dbReference>
<dbReference type="RefSeq" id="WP_002438516.1">
    <property type="nucleotide sequence ID" value="NC_002976.3"/>
</dbReference>
<dbReference type="SMR" id="Q5HLX8"/>
<dbReference type="STRING" id="176279.SERP1853"/>
<dbReference type="KEGG" id="ser:SERP1853"/>
<dbReference type="eggNOG" id="COG0314">
    <property type="taxonomic scope" value="Bacteria"/>
</dbReference>
<dbReference type="HOGENOM" id="CLU_089568_1_2_9"/>
<dbReference type="UniPathway" id="UPA00344"/>
<dbReference type="Proteomes" id="UP000000531">
    <property type="component" value="Chromosome"/>
</dbReference>
<dbReference type="GO" id="GO:0030366">
    <property type="term" value="F:molybdopterin synthase activity"/>
    <property type="evidence" value="ECO:0007669"/>
    <property type="project" value="UniProtKB-EC"/>
</dbReference>
<dbReference type="GO" id="GO:0006777">
    <property type="term" value="P:Mo-molybdopterin cofactor biosynthetic process"/>
    <property type="evidence" value="ECO:0007669"/>
    <property type="project" value="UniProtKB-KW"/>
</dbReference>
<dbReference type="CDD" id="cd00756">
    <property type="entry name" value="MoaE"/>
    <property type="match status" value="1"/>
</dbReference>
<dbReference type="FunFam" id="3.90.1170.40:FF:000003">
    <property type="entry name" value="Molybdopterin converting factor subunit 2"/>
    <property type="match status" value="1"/>
</dbReference>
<dbReference type="Gene3D" id="3.90.1170.40">
    <property type="entry name" value="Molybdopterin biosynthesis MoaE subunit"/>
    <property type="match status" value="1"/>
</dbReference>
<dbReference type="InterPro" id="IPR036563">
    <property type="entry name" value="MoaE_sf"/>
</dbReference>
<dbReference type="InterPro" id="IPR003448">
    <property type="entry name" value="Mopterin_biosynth_MoaE"/>
</dbReference>
<dbReference type="PANTHER" id="PTHR23404">
    <property type="entry name" value="MOLYBDOPTERIN SYNTHASE RELATED"/>
    <property type="match status" value="1"/>
</dbReference>
<dbReference type="Pfam" id="PF02391">
    <property type="entry name" value="MoaE"/>
    <property type="match status" value="1"/>
</dbReference>
<dbReference type="SUPFAM" id="SSF54690">
    <property type="entry name" value="Molybdopterin synthase subunit MoaE"/>
    <property type="match status" value="1"/>
</dbReference>
<reference key="1">
    <citation type="journal article" date="2005" name="J. Bacteriol.">
        <title>Insights on evolution of virulence and resistance from the complete genome analysis of an early methicillin-resistant Staphylococcus aureus strain and a biofilm-producing methicillin-resistant Staphylococcus epidermidis strain.</title>
        <authorList>
            <person name="Gill S.R."/>
            <person name="Fouts D.E."/>
            <person name="Archer G.L."/>
            <person name="Mongodin E.F."/>
            <person name="DeBoy R.T."/>
            <person name="Ravel J."/>
            <person name="Paulsen I.T."/>
            <person name="Kolonay J.F."/>
            <person name="Brinkac L.M."/>
            <person name="Beanan M.J."/>
            <person name="Dodson R.J."/>
            <person name="Daugherty S.C."/>
            <person name="Madupu R."/>
            <person name="Angiuoli S.V."/>
            <person name="Durkin A.S."/>
            <person name="Haft D.H."/>
            <person name="Vamathevan J.J."/>
            <person name="Khouri H."/>
            <person name="Utterback T.R."/>
            <person name="Lee C."/>
            <person name="Dimitrov G."/>
            <person name="Jiang L."/>
            <person name="Qin H."/>
            <person name="Weidman J."/>
            <person name="Tran K."/>
            <person name="Kang K.H."/>
            <person name="Hance I.R."/>
            <person name="Nelson K.E."/>
            <person name="Fraser C.M."/>
        </authorList>
    </citation>
    <scope>NUCLEOTIDE SEQUENCE [LARGE SCALE GENOMIC DNA]</scope>
    <source>
        <strain>ATCC 35984 / DSM 28319 / BCRC 17069 / CCUG 31568 / BM 3577 / RP62A</strain>
    </source>
</reference>
<comment type="function">
    <text evidence="1">Converts molybdopterin precursor Z into molybdopterin. This requires the incorporation of two sulfur atoms into precursor Z to generate a dithiolene group. The sulfur is provided by MoaD (By similarity).</text>
</comment>
<comment type="catalytic activity">
    <reaction>
        <text>2 [molybdopterin-synthase sulfur-carrier protein]-C-terminal-Gly-aminoethanethioate + cyclic pyranopterin phosphate + H2O = molybdopterin + 2 [molybdopterin-synthase sulfur-carrier protein]-C-terminal Gly-Gly + 2 H(+)</text>
        <dbReference type="Rhea" id="RHEA:26333"/>
        <dbReference type="Rhea" id="RHEA-COMP:12202"/>
        <dbReference type="Rhea" id="RHEA-COMP:19907"/>
        <dbReference type="ChEBI" id="CHEBI:15377"/>
        <dbReference type="ChEBI" id="CHEBI:15378"/>
        <dbReference type="ChEBI" id="CHEBI:58698"/>
        <dbReference type="ChEBI" id="CHEBI:59648"/>
        <dbReference type="ChEBI" id="CHEBI:90778"/>
        <dbReference type="ChEBI" id="CHEBI:232372"/>
        <dbReference type="EC" id="2.8.1.12"/>
    </reaction>
</comment>
<comment type="pathway">
    <text>Cofactor biosynthesis; molybdopterin biosynthesis.</text>
</comment>
<comment type="subunit">
    <text evidence="1">Heterotetramer of 2 MoaD subunits and 2 MoaE subunits. Also stable as homodimer. The enzyme changes between these two forms during catalysis (By similarity).</text>
</comment>
<comment type="similarity">
    <text evidence="2">Belongs to the MoaE family.</text>
</comment>
<proteinExistence type="inferred from homology"/>
<protein>
    <recommendedName>
        <fullName>Molybdopterin synthase catalytic subunit</fullName>
        <ecNumber>2.8.1.12</ecNumber>
    </recommendedName>
    <alternativeName>
        <fullName>MPT synthase subunit 2</fullName>
    </alternativeName>
    <alternativeName>
        <fullName>Molybdenum cofactor biosynthesis protein E</fullName>
    </alternativeName>
    <alternativeName>
        <fullName>Molybdopterin-converting factor large subunit</fullName>
    </alternativeName>
    <alternativeName>
        <fullName>Molybdopterin-converting factor subunit 2</fullName>
    </alternativeName>
</protein>
<sequence>MKQFEIVTQPIETEQYRDFTINERQGAVVVFTGHVREWTKGIRTQHLEYEAYIPMAEKKLAQIGKEIEEKWPGTITTIVHRIGPLQISDIAVLIAVSSPHRKAAYAANEYAIERIKEIVPIWKKEIWEDGAEWQGHQKGTYNEAKKGKAR</sequence>